<proteinExistence type="evidence at transcript level"/>
<name>TPPII_ORYSJ</name>
<comment type="function">
    <text evidence="1">Serine protease that may function in the proteasome pathway.</text>
</comment>
<comment type="catalytic activity">
    <reaction evidence="1">
        <text>Release of an N-terminal tripeptide from a polypeptide.</text>
        <dbReference type="EC" id="3.4.14.10"/>
    </reaction>
</comment>
<comment type="similarity">
    <text evidence="4">Belongs to the peptidase S8 family.</text>
</comment>
<comment type="sequence caution" evidence="4">
    <conflict type="erroneous gene model prediction">
        <sequence resource="EMBL-CDS" id="BAD28384"/>
    </conflict>
</comment>
<keyword id="KW-0031">Aminopeptidase</keyword>
<keyword id="KW-0378">Hydrolase</keyword>
<keyword id="KW-0645">Protease</keyword>
<keyword id="KW-1185">Reference proteome</keyword>
<keyword id="KW-0720">Serine protease</keyword>
<sequence>MWHLRGRSSVTAAAAAALHKPVAHLRLLLAVSAWSVPAAASNVAAASTTTRGGPSPSAGVAPRAMPSSSSSPPSAAEGTTAAAGGFRLTEPSFLESLMPKKEIGVDRFLAAHPEYDGRGALIAIFDSGVDPAAAGLQTTSDGKPKILDVIDCTGSGDVDTSKVVKADDDGSIVGASGTHLTINPSWKNPSQEWHVGCKLVYELFTDTLTSRLKKERKKKWDEHNQEAISEALKQLNEFEKKHSKSDDAKQKMAREDLQSRLEYLRKQAEGYDDRGPVIDIVAWHDGDVWRVAVDTQGLEGNKNCGKLADFVPLTNYRLERKFGIFSKLDACSFVANIYDDGNLVSIVTDCSPHATHVAGIAAAFHPDEPLLNGVAPGAQLISCKIGDTRLGSMETGTGLVRALIAAVEHKCDLINMSYGEPTLLPDYGRFIDLASEVVDKHRIIFISSAGNNGPALNTVGAPGGTSSSIIGVGAYVSPAMAAGAHCVVQAPAEGMEYTWSSRGPTADGDLGVSISAPGGAVAPVPTWTLQSRMLMNGTSMSSPSACGGVALLVSAMKAEGIPLSPYTVRKAIENTAASISDVPEEKLTTGHGLLQVDRAFEYAQQAKELPLVSYRISINQVGKPTSKLRGIYLRGSNTCRQTSEWTVQLDPKFHEDASNMEQLVPFEECLQLHSTDSSVIKIPEYIMVTNNGRTFNIVVNPVNISSGLHYYEVYGIDCKAPWRGPIFRVPITVIKPIALSGEPPALTLSNLSFKSGHIERRFINVPIGASWVEVTMRTSAFDTPRRFFLDTVQICPLKRPIKWEAVVTFSSPSLKNFSFPVEGGLTLELSIAQFWSSGIASHEPTCVDFEIVFHGISVDQKIIGLDGSEAPVRVVARSLLASERLVPVATLNKVKTPYRPVESNLCSLPPSRDRLPSGKQIIALTLTYKFKLEDGAEIKPRVPLLNNRIYDNKFESQYYRISDSNKCVYSSGDVYPNYVKLSKGEYTLQLYIRHDNVQLLEKLKQLVLFIERKLEKKDFIQLSFYSEPDGPTVGNGTFKSSILVPGEPEAFYVGPPSREKLPKNVLPGSVLVGSITYGAVSSFSKKDDQNQHAPASYSISYLIPPSKVDNDKEKGVSSGRKSISERLDDEVRDTKIKFLSGFNQETEDDKSSWTALVASLKPEYPKYTPLLAKILECIVQKATSDDKFSHQKEIIAAADEVVDSIDKEDLAKSLSLKPDPEDEEAQKNKKKMEETRDQLADALYQKGLALAEIESLKTDESTEASAKDVFEENYKELIKWVDAKTTKYGSLTVLRERRCGRLGTALKVLNDMIQDDSEQPKKRLYDLKIQLIEEIGWVHVSAYEKQWMHVRFPPSLPPF</sequence>
<reference key="1">
    <citation type="journal article" date="2005" name="Nature">
        <title>The map-based sequence of the rice genome.</title>
        <authorList>
            <consortium name="International rice genome sequencing project (IRGSP)"/>
        </authorList>
    </citation>
    <scope>NUCLEOTIDE SEQUENCE [LARGE SCALE GENOMIC DNA]</scope>
    <source>
        <strain>cv. Nipponbare</strain>
    </source>
</reference>
<reference key="2">
    <citation type="journal article" date="2008" name="Nucleic Acids Res.">
        <title>The rice annotation project database (RAP-DB): 2008 update.</title>
        <authorList>
            <consortium name="The rice annotation project (RAP)"/>
        </authorList>
    </citation>
    <scope>GENOME REANNOTATION</scope>
    <source>
        <strain>cv. Nipponbare</strain>
    </source>
</reference>
<reference key="3">
    <citation type="journal article" date="2013" name="Rice">
        <title>Improvement of the Oryza sativa Nipponbare reference genome using next generation sequence and optical map data.</title>
        <authorList>
            <person name="Kawahara Y."/>
            <person name="de la Bastide M."/>
            <person name="Hamilton J.P."/>
            <person name="Kanamori H."/>
            <person name="McCombie W.R."/>
            <person name="Ouyang S."/>
            <person name="Schwartz D.C."/>
            <person name="Tanaka T."/>
            <person name="Wu J."/>
            <person name="Zhou S."/>
            <person name="Childs K.L."/>
            <person name="Davidson R.M."/>
            <person name="Lin H."/>
            <person name="Quesada-Ocampo L."/>
            <person name="Vaillancourt B."/>
            <person name="Sakai H."/>
            <person name="Lee S.S."/>
            <person name="Kim J."/>
            <person name="Numa H."/>
            <person name="Itoh T."/>
            <person name="Buell C.R."/>
            <person name="Matsumoto T."/>
        </authorList>
    </citation>
    <scope>GENOME REANNOTATION</scope>
    <source>
        <strain>cv. Nipponbare</strain>
    </source>
</reference>
<reference key="4">
    <citation type="journal article" date="2003" name="Science">
        <title>Collection, mapping, and annotation of over 28,000 cDNA clones from japonica rice.</title>
        <authorList>
            <consortium name="The rice full-length cDNA consortium"/>
        </authorList>
    </citation>
    <scope>NUCLEOTIDE SEQUENCE [LARGE SCALE MRNA]</scope>
    <source>
        <strain>cv. Nipponbare</strain>
    </source>
</reference>
<accession>Q6ESI7</accession>
<accession>A0A0P0VMN4</accession>
<accession>Q6ESI6</accession>
<gene>
    <name type="primary">TPP2</name>
    <name type="ordered locus">Os02g0664300</name>
    <name type="ordered locus">LOC_Os02g44520</name>
    <name type="ORF">P0461B08.4-1</name>
    <name type="ORF">P0461B08.4-2</name>
</gene>
<evidence type="ECO:0000250" key="1">
    <source>
        <dbReference type="UniProtKB" id="F4JVN6"/>
    </source>
</evidence>
<evidence type="ECO:0000255" key="2">
    <source>
        <dbReference type="PROSITE-ProRule" id="PRU01240"/>
    </source>
</evidence>
<evidence type="ECO:0000256" key="3">
    <source>
        <dbReference type="SAM" id="MobiDB-lite"/>
    </source>
</evidence>
<evidence type="ECO:0000305" key="4"/>
<protein>
    <recommendedName>
        <fullName>Tripeptidyl-peptidase 2</fullName>
        <ecNumber evidence="1">3.4.14.10</ecNumber>
    </recommendedName>
    <alternativeName>
        <fullName>Tripeptidyl-peptidase II</fullName>
        <shortName>TPPII</shortName>
    </alternativeName>
</protein>
<feature type="chain" id="PRO_0000429314" description="Tripeptidyl-peptidase 2">
    <location>
        <begin position="1"/>
        <end position="1359"/>
    </location>
</feature>
<feature type="domain" description="Peptidase S8" evidence="2">
    <location>
        <begin position="102"/>
        <end position="600"/>
    </location>
</feature>
<feature type="region of interest" description="Disordered" evidence="3">
    <location>
        <begin position="45"/>
        <end position="81"/>
    </location>
</feature>
<feature type="compositionally biased region" description="Low complexity" evidence="3">
    <location>
        <begin position="64"/>
        <end position="81"/>
    </location>
</feature>
<feature type="active site" description="Charge relay system" evidence="2">
    <location>
        <position position="126"/>
    </location>
</feature>
<feature type="active site" description="Charge relay system" evidence="2">
    <location>
        <position position="353"/>
    </location>
</feature>
<feature type="active site" description="Charge relay system" evidence="2">
    <location>
        <position position="539"/>
    </location>
</feature>
<feature type="sequence conflict" description="In Ref. 4; AK067099." evidence="4" ref="4">
    <original>S</original>
    <variation>C</variation>
    <location>
        <position position="245"/>
    </location>
</feature>
<feature type="sequence conflict" description="In Ref. 4; AK067099." evidence="4" ref="4">
    <original>D</original>
    <variation>E</variation>
    <location>
        <position position="1199"/>
    </location>
</feature>
<feature type="sequence conflict" description="In Ref. 4; AK067099." evidence="4" ref="4">
    <original>A</original>
    <variation>S</variation>
    <location>
        <position position="1249"/>
    </location>
</feature>
<dbReference type="EC" id="3.4.14.10" evidence="1"/>
<dbReference type="EMBL" id="AP005108">
    <property type="protein sequence ID" value="BAD28383.1"/>
    <property type="molecule type" value="Genomic_DNA"/>
</dbReference>
<dbReference type="EMBL" id="AP005108">
    <property type="protein sequence ID" value="BAD28384.1"/>
    <property type="status" value="ALT_SEQ"/>
    <property type="molecule type" value="Genomic_DNA"/>
</dbReference>
<dbReference type="EMBL" id="AP008208">
    <property type="protein sequence ID" value="BAF09575.1"/>
    <property type="molecule type" value="Genomic_DNA"/>
</dbReference>
<dbReference type="EMBL" id="AP014958">
    <property type="protein sequence ID" value="BAS80168.1"/>
    <property type="molecule type" value="Genomic_DNA"/>
</dbReference>
<dbReference type="EMBL" id="AK067099">
    <property type="status" value="NOT_ANNOTATED_CDS"/>
    <property type="molecule type" value="mRNA"/>
</dbReference>
<dbReference type="RefSeq" id="XP_015625917.1">
    <property type="nucleotide sequence ID" value="XM_015770431.1"/>
</dbReference>
<dbReference type="RefSeq" id="XP_015625918.1">
    <property type="nucleotide sequence ID" value="XM_015770432.1"/>
</dbReference>
<dbReference type="SMR" id="Q6ESI7"/>
<dbReference type="BioGRID" id="799274">
    <property type="interactions" value="1"/>
</dbReference>
<dbReference type="FunCoup" id="Q6ESI7">
    <property type="interactions" value="2793"/>
</dbReference>
<dbReference type="STRING" id="39947.Q6ESI7"/>
<dbReference type="MEROPS" id="S08.A56"/>
<dbReference type="PaxDb" id="39947-Q6ESI7"/>
<dbReference type="EnsemblPlants" id="Os02t0664300-01">
    <property type="protein sequence ID" value="Os02t0664300-01"/>
    <property type="gene ID" value="Os02g0664300"/>
</dbReference>
<dbReference type="Gramene" id="Os02t0664300-01">
    <property type="protein sequence ID" value="Os02t0664300-01"/>
    <property type="gene ID" value="Os02g0664300"/>
</dbReference>
<dbReference type="KEGG" id="dosa:Os02g0664300"/>
<dbReference type="eggNOG" id="KOG1114">
    <property type="taxonomic scope" value="Eukaryota"/>
</dbReference>
<dbReference type="InParanoid" id="Q6ESI7"/>
<dbReference type="OMA" id="SLRDFQC"/>
<dbReference type="OrthoDB" id="10256524at2759"/>
<dbReference type="Proteomes" id="UP000000763">
    <property type="component" value="Chromosome 2"/>
</dbReference>
<dbReference type="Proteomes" id="UP000059680">
    <property type="component" value="Chromosome 2"/>
</dbReference>
<dbReference type="ExpressionAtlas" id="Q6ESI7">
    <property type="expression patterns" value="baseline and differential"/>
</dbReference>
<dbReference type="GO" id="GO:0005829">
    <property type="term" value="C:cytosol"/>
    <property type="evidence" value="ECO:0000318"/>
    <property type="project" value="GO_Central"/>
</dbReference>
<dbReference type="GO" id="GO:0004177">
    <property type="term" value="F:aminopeptidase activity"/>
    <property type="evidence" value="ECO:0007669"/>
    <property type="project" value="UniProtKB-KW"/>
</dbReference>
<dbReference type="GO" id="GO:0003729">
    <property type="term" value="F:mRNA binding"/>
    <property type="evidence" value="ECO:0007669"/>
    <property type="project" value="EnsemblPlants"/>
</dbReference>
<dbReference type="GO" id="GO:0004252">
    <property type="term" value="F:serine-type endopeptidase activity"/>
    <property type="evidence" value="ECO:0007669"/>
    <property type="project" value="InterPro"/>
</dbReference>
<dbReference type="GO" id="GO:0008240">
    <property type="term" value="F:tripeptidyl-peptidase activity"/>
    <property type="evidence" value="ECO:0000318"/>
    <property type="project" value="GO_Central"/>
</dbReference>
<dbReference type="GO" id="GO:0006508">
    <property type="term" value="P:proteolysis"/>
    <property type="evidence" value="ECO:0007669"/>
    <property type="project" value="UniProtKB-KW"/>
</dbReference>
<dbReference type="CDD" id="cd04857">
    <property type="entry name" value="Peptidases_S8_Tripeptidyl_Aminopeptidase_II"/>
    <property type="match status" value="1"/>
</dbReference>
<dbReference type="FunFam" id="1.25.40.710:FF:000002">
    <property type="entry name" value="Tripeptidyl-peptidase 2"/>
    <property type="match status" value="1"/>
</dbReference>
<dbReference type="FunFam" id="2.20.25.690:FF:000001">
    <property type="entry name" value="Tripeptidyl-peptidase 2"/>
    <property type="match status" value="1"/>
</dbReference>
<dbReference type="FunFam" id="2.60.40.3170:FF:000002">
    <property type="entry name" value="Tripeptidyl-peptidase 2"/>
    <property type="match status" value="1"/>
</dbReference>
<dbReference type="FunFam" id="3.40.50.200:FF:000013">
    <property type="entry name" value="Tripeptidyl-peptidase 2 homolog"/>
    <property type="match status" value="1"/>
</dbReference>
<dbReference type="FunFam" id="3.40.50.200:FF:000009">
    <property type="entry name" value="tripeptidyl-peptidase 2 isoform X1"/>
    <property type="match status" value="1"/>
</dbReference>
<dbReference type="Gene3D" id="1.25.40.710">
    <property type="match status" value="1"/>
</dbReference>
<dbReference type="Gene3D" id="2.20.25.690">
    <property type="match status" value="1"/>
</dbReference>
<dbReference type="Gene3D" id="2.60.40.3170">
    <property type="match status" value="1"/>
</dbReference>
<dbReference type="Gene3D" id="3.40.50.200">
    <property type="entry name" value="Peptidase S8/S53 domain"/>
    <property type="match status" value="1"/>
</dbReference>
<dbReference type="InterPro" id="IPR000209">
    <property type="entry name" value="Peptidase_S8/S53_dom"/>
</dbReference>
<dbReference type="InterPro" id="IPR036852">
    <property type="entry name" value="Peptidase_S8/S53_dom_sf"/>
</dbReference>
<dbReference type="InterPro" id="IPR023828">
    <property type="entry name" value="Peptidase_S8_Ser-AS"/>
</dbReference>
<dbReference type="InterPro" id="IPR050131">
    <property type="entry name" value="Peptidase_S8_subtilisin-like"/>
</dbReference>
<dbReference type="InterPro" id="IPR015500">
    <property type="entry name" value="Peptidase_S8_subtilisin-rel"/>
</dbReference>
<dbReference type="InterPro" id="IPR034051">
    <property type="entry name" value="TPP_II_domain"/>
</dbReference>
<dbReference type="InterPro" id="IPR046939">
    <property type="entry name" value="TPPII_C_sf"/>
</dbReference>
<dbReference type="InterPro" id="IPR048384">
    <property type="entry name" value="TPPII_GBD"/>
</dbReference>
<dbReference type="InterPro" id="IPR048383">
    <property type="entry name" value="TPPII_Ig-like-1"/>
</dbReference>
<dbReference type="InterPro" id="IPR022229">
    <property type="entry name" value="TPPII_Ig-like-2"/>
</dbReference>
<dbReference type="InterPro" id="IPR046940">
    <property type="entry name" value="TPPII_Ig-like_sf"/>
</dbReference>
<dbReference type="PANTHER" id="PTHR43806">
    <property type="entry name" value="PEPTIDASE S8"/>
    <property type="match status" value="1"/>
</dbReference>
<dbReference type="PANTHER" id="PTHR43806:SF14">
    <property type="entry name" value="TRIPEPTIDYL-PEPTIDASE 2"/>
    <property type="match status" value="1"/>
</dbReference>
<dbReference type="Pfam" id="PF00082">
    <property type="entry name" value="Peptidase_S8"/>
    <property type="match status" value="1"/>
</dbReference>
<dbReference type="Pfam" id="PF12580">
    <property type="entry name" value="TPPII"/>
    <property type="match status" value="1"/>
</dbReference>
<dbReference type="Pfam" id="PF21316">
    <property type="entry name" value="TPPII_GBD"/>
    <property type="match status" value="1"/>
</dbReference>
<dbReference type="Pfam" id="PF21223">
    <property type="entry name" value="TPPII_Ig-like-1"/>
    <property type="match status" value="1"/>
</dbReference>
<dbReference type="PRINTS" id="PR00723">
    <property type="entry name" value="SUBTILISIN"/>
</dbReference>
<dbReference type="SUPFAM" id="SSF52743">
    <property type="entry name" value="Subtilisin-like"/>
    <property type="match status" value="1"/>
</dbReference>
<dbReference type="PROSITE" id="PS51892">
    <property type="entry name" value="SUBTILASE"/>
    <property type="match status" value="1"/>
</dbReference>
<dbReference type="PROSITE" id="PS00138">
    <property type="entry name" value="SUBTILASE_SER"/>
    <property type="match status" value="1"/>
</dbReference>
<organism>
    <name type="scientific">Oryza sativa subsp. japonica</name>
    <name type="common">Rice</name>
    <dbReference type="NCBI Taxonomy" id="39947"/>
    <lineage>
        <taxon>Eukaryota</taxon>
        <taxon>Viridiplantae</taxon>
        <taxon>Streptophyta</taxon>
        <taxon>Embryophyta</taxon>
        <taxon>Tracheophyta</taxon>
        <taxon>Spermatophyta</taxon>
        <taxon>Magnoliopsida</taxon>
        <taxon>Liliopsida</taxon>
        <taxon>Poales</taxon>
        <taxon>Poaceae</taxon>
        <taxon>BOP clade</taxon>
        <taxon>Oryzoideae</taxon>
        <taxon>Oryzeae</taxon>
        <taxon>Oryzinae</taxon>
        <taxon>Oryza</taxon>
        <taxon>Oryza sativa</taxon>
    </lineage>
</organism>